<dbReference type="EMBL" id="CP000446">
    <property type="protein sequence ID" value="ABI38205.1"/>
    <property type="molecule type" value="Genomic_DNA"/>
</dbReference>
<dbReference type="RefSeq" id="WP_011621914.1">
    <property type="nucleotide sequence ID" value="NC_008321.1"/>
</dbReference>
<dbReference type="SMR" id="Q0HL62"/>
<dbReference type="KEGG" id="she:Shewmr4_1125"/>
<dbReference type="HOGENOM" id="CLU_040469_3_2_6"/>
<dbReference type="GO" id="GO:0005829">
    <property type="term" value="C:cytosol"/>
    <property type="evidence" value="ECO:0007669"/>
    <property type="project" value="TreeGrafter"/>
</dbReference>
<dbReference type="GO" id="GO:0005524">
    <property type="term" value="F:ATP binding"/>
    <property type="evidence" value="ECO:0007669"/>
    <property type="project" value="UniProtKB-UniRule"/>
</dbReference>
<dbReference type="GO" id="GO:0016887">
    <property type="term" value="F:ATP hydrolysis activity"/>
    <property type="evidence" value="ECO:0007669"/>
    <property type="project" value="InterPro"/>
</dbReference>
<dbReference type="GO" id="GO:0140664">
    <property type="term" value="F:ATP-dependent DNA damage sensor activity"/>
    <property type="evidence" value="ECO:0007669"/>
    <property type="project" value="InterPro"/>
</dbReference>
<dbReference type="GO" id="GO:0003684">
    <property type="term" value="F:damaged DNA binding"/>
    <property type="evidence" value="ECO:0007669"/>
    <property type="project" value="UniProtKB-UniRule"/>
</dbReference>
<dbReference type="GO" id="GO:0003697">
    <property type="term" value="F:single-stranded DNA binding"/>
    <property type="evidence" value="ECO:0007669"/>
    <property type="project" value="UniProtKB-UniRule"/>
</dbReference>
<dbReference type="GO" id="GO:0006310">
    <property type="term" value="P:DNA recombination"/>
    <property type="evidence" value="ECO:0007669"/>
    <property type="project" value="UniProtKB-UniRule"/>
</dbReference>
<dbReference type="GO" id="GO:0006281">
    <property type="term" value="P:DNA repair"/>
    <property type="evidence" value="ECO:0007669"/>
    <property type="project" value="UniProtKB-UniRule"/>
</dbReference>
<dbReference type="GO" id="GO:0009432">
    <property type="term" value="P:SOS response"/>
    <property type="evidence" value="ECO:0007669"/>
    <property type="project" value="UniProtKB-UniRule"/>
</dbReference>
<dbReference type="CDD" id="cd00983">
    <property type="entry name" value="RecA"/>
    <property type="match status" value="1"/>
</dbReference>
<dbReference type="FunFam" id="3.40.50.300:FF:000087">
    <property type="entry name" value="Recombinase RecA"/>
    <property type="match status" value="1"/>
</dbReference>
<dbReference type="Gene3D" id="3.40.50.300">
    <property type="entry name" value="P-loop containing nucleotide triphosphate hydrolases"/>
    <property type="match status" value="1"/>
</dbReference>
<dbReference type="HAMAP" id="MF_00268">
    <property type="entry name" value="RecA"/>
    <property type="match status" value="1"/>
</dbReference>
<dbReference type="InterPro" id="IPR003593">
    <property type="entry name" value="AAA+_ATPase"/>
</dbReference>
<dbReference type="InterPro" id="IPR013765">
    <property type="entry name" value="DNA_recomb/repair_RecA"/>
</dbReference>
<dbReference type="InterPro" id="IPR020584">
    <property type="entry name" value="DNA_recomb/repair_RecA_CS"/>
</dbReference>
<dbReference type="InterPro" id="IPR027417">
    <property type="entry name" value="P-loop_NTPase"/>
</dbReference>
<dbReference type="InterPro" id="IPR049261">
    <property type="entry name" value="RecA-like_C"/>
</dbReference>
<dbReference type="InterPro" id="IPR049428">
    <property type="entry name" value="RecA-like_N"/>
</dbReference>
<dbReference type="InterPro" id="IPR020588">
    <property type="entry name" value="RecA_ATP-bd"/>
</dbReference>
<dbReference type="InterPro" id="IPR023400">
    <property type="entry name" value="RecA_C_sf"/>
</dbReference>
<dbReference type="InterPro" id="IPR020587">
    <property type="entry name" value="RecA_monomer-monomer_interface"/>
</dbReference>
<dbReference type="NCBIfam" id="TIGR02012">
    <property type="entry name" value="tigrfam_recA"/>
    <property type="match status" value="1"/>
</dbReference>
<dbReference type="PANTHER" id="PTHR45900:SF1">
    <property type="entry name" value="MITOCHONDRIAL DNA REPAIR PROTEIN RECA HOMOLOG-RELATED"/>
    <property type="match status" value="1"/>
</dbReference>
<dbReference type="PANTHER" id="PTHR45900">
    <property type="entry name" value="RECA"/>
    <property type="match status" value="1"/>
</dbReference>
<dbReference type="Pfam" id="PF00154">
    <property type="entry name" value="RecA"/>
    <property type="match status" value="1"/>
</dbReference>
<dbReference type="Pfam" id="PF21096">
    <property type="entry name" value="RecA_C"/>
    <property type="match status" value="1"/>
</dbReference>
<dbReference type="PRINTS" id="PR00142">
    <property type="entry name" value="RECA"/>
</dbReference>
<dbReference type="SMART" id="SM00382">
    <property type="entry name" value="AAA"/>
    <property type="match status" value="1"/>
</dbReference>
<dbReference type="SUPFAM" id="SSF52540">
    <property type="entry name" value="P-loop containing nucleoside triphosphate hydrolases"/>
    <property type="match status" value="1"/>
</dbReference>
<dbReference type="SUPFAM" id="SSF54752">
    <property type="entry name" value="RecA protein, C-terminal domain"/>
    <property type="match status" value="1"/>
</dbReference>
<dbReference type="PROSITE" id="PS00321">
    <property type="entry name" value="RECA_1"/>
    <property type="match status" value="1"/>
</dbReference>
<dbReference type="PROSITE" id="PS50162">
    <property type="entry name" value="RECA_2"/>
    <property type="match status" value="1"/>
</dbReference>
<dbReference type="PROSITE" id="PS50163">
    <property type="entry name" value="RECA_3"/>
    <property type="match status" value="1"/>
</dbReference>
<feature type="chain" id="PRO_1000047998" description="Protein RecA">
    <location>
        <begin position="1"/>
        <end position="357"/>
    </location>
</feature>
<feature type="region of interest" description="Disordered" evidence="2">
    <location>
        <begin position="335"/>
        <end position="357"/>
    </location>
</feature>
<feature type="binding site" evidence="1">
    <location>
        <begin position="67"/>
        <end position="74"/>
    </location>
    <ligand>
        <name>ATP</name>
        <dbReference type="ChEBI" id="CHEBI:30616"/>
    </ligand>
</feature>
<keyword id="KW-0067">ATP-binding</keyword>
<keyword id="KW-0963">Cytoplasm</keyword>
<keyword id="KW-0227">DNA damage</keyword>
<keyword id="KW-0233">DNA recombination</keyword>
<keyword id="KW-0234">DNA repair</keyword>
<keyword id="KW-0238">DNA-binding</keyword>
<keyword id="KW-0547">Nucleotide-binding</keyword>
<keyword id="KW-0742">SOS response</keyword>
<protein>
    <recommendedName>
        <fullName evidence="1">Protein RecA</fullName>
    </recommendedName>
    <alternativeName>
        <fullName evidence="1">Recombinase A</fullName>
    </alternativeName>
</protein>
<organism>
    <name type="scientific">Shewanella sp. (strain MR-4)</name>
    <dbReference type="NCBI Taxonomy" id="60480"/>
    <lineage>
        <taxon>Bacteria</taxon>
        <taxon>Pseudomonadati</taxon>
        <taxon>Pseudomonadota</taxon>
        <taxon>Gammaproteobacteria</taxon>
        <taxon>Alteromonadales</taxon>
        <taxon>Shewanellaceae</taxon>
        <taxon>Shewanella</taxon>
    </lineage>
</organism>
<name>RECA_SHESM</name>
<accession>Q0HL62</accession>
<evidence type="ECO:0000255" key="1">
    <source>
        <dbReference type="HAMAP-Rule" id="MF_00268"/>
    </source>
</evidence>
<evidence type="ECO:0000256" key="2">
    <source>
        <dbReference type="SAM" id="MobiDB-lite"/>
    </source>
</evidence>
<reference key="1">
    <citation type="submission" date="2006-08" db="EMBL/GenBank/DDBJ databases">
        <title>Complete sequence of Shewanella sp. MR-4.</title>
        <authorList>
            <consortium name="US DOE Joint Genome Institute"/>
            <person name="Copeland A."/>
            <person name="Lucas S."/>
            <person name="Lapidus A."/>
            <person name="Barry K."/>
            <person name="Detter J.C."/>
            <person name="Glavina del Rio T."/>
            <person name="Hammon N."/>
            <person name="Israni S."/>
            <person name="Dalin E."/>
            <person name="Tice H."/>
            <person name="Pitluck S."/>
            <person name="Kiss H."/>
            <person name="Brettin T."/>
            <person name="Bruce D."/>
            <person name="Han C."/>
            <person name="Tapia R."/>
            <person name="Gilna P."/>
            <person name="Schmutz J."/>
            <person name="Larimer F."/>
            <person name="Land M."/>
            <person name="Hauser L."/>
            <person name="Kyrpides N."/>
            <person name="Mikhailova N."/>
            <person name="Nealson K."/>
            <person name="Konstantinidis K."/>
            <person name="Klappenbach J."/>
            <person name="Tiedje J."/>
            <person name="Richardson P."/>
        </authorList>
    </citation>
    <scope>NUCLEOTIDE SEQUENCE [LARGE SCALE GENOMIC DNA]</scope>
    <source>
        <strain>MR-4</strain>
    </source>
</reference>
<sequence>MKVDPNKEKALAAVLSQIEKQFGKGSIMKLGEDRSMDVETISTGSLSLDVALGAGGLPMGRIVEIYGPESSGKTTLTLEVIAAAQREGKTCAFIDAEHALDPIYAKKLGVDIDNLLCSQPDTGEQALEICDALTRSGAVDVIIVDSVAALTPKAEIEGEIGDSHMGLAARMMSQAMRKLAGNLKQSNTLLIFINQIRMKIGVMFGNPETTTGGNALKFYASVRLDIRRTGAIKEGDEVVGNETRVKVVKNKVAAPFKQAEFQILYGQGINRTGELVDLGVAHKLIEKAGAWYSYKGDKIGQGRANAGKYLTENPAIAAEIDKTLRELLLSNPAALSSSASDDENSEGNVDFETGEVF</sequence>
<gene>
    <name evidence="1" type="primary">recA</name>
    <name type="ordered locus">Shewmr4_1125</name>
</gene>
<comment type="function">
    <text evidence="1">Can catalyze the hydrolysis of ATP in the presence of single-stranded DNA, the ATP-dependent uptake of single-stranded DNA by duplex DNA, and the ATP-dependent hybridization of homologous single-stranded DNAs. It interacts with LexA causing its activation and leading to its autocatalytic cleavage.</text>
</comment>
<comment type="subcellular location">
    <subcellularLocation>
        <location evidence="1">Cytoplasm</location>
    </subcellularLocation>
</comment>
<comment type="similarity">
    <text evidence="1">Belongs to the RecA family.</text>
</comment>
<proteinExistence type="inferred from homology"/>